<proteinExistence type="inferred from homology"/>
<accession>Q3IL79</accession>
<evidence type="ECO:0000255" key="1">
    <source>
        <dbReference type="HAMAP-Rule" id="MF_00514"/>
    </source>
</evidence>
<evidence type="ECO:0000256" key="2">
    <source>
        <dbReference type="SAM" id="MobiDB-lite"/>
    </source>
</evidence>
<evidence type="ECO:0000305" key="3"/>
<name>RL35_PSET1</name>
<protein>
    <recommendedName>
        <fullName evidence="1">Large ribosomal subunit protein bL35</fullName>
    </recommendedName>
    <alternativeName>
        <fullName evidence="3">50S ribosomal protein L35</fullName>
    </alternativeName>
</protein>
<comment type="similarity">
    <text evidence="1">Belongs to the bacterial ribosomal protein bL35 family.</text>
</comment>
<feature type="chain" id="PRO_0000258725" description="Large ribosomal subunit protein bL35">
    <location>
        <begin position="1"/>
        <end position="66"/>
    </location>
</feature>
<feature type="region of interest" description="Disordered" evidence="2">
    <location>
        <begin position="1"/>
        <end position="22"/>
    </location>
</feature>
<reference key="1">
    <citation type="journal article" date="2005" name="Genome Res.">
        <title>Coping with cold: the genome of the versatile marine Antarctica bacterium Pseudoalteromonas haloplanktis TAC125.</title>
        <authorList>
            <person name="Medigue C."/>
            <person name="Krin E."/>
            <person name="Pascal G."/>
            <person name="Barbe V."/>
            <person name="Bernsel A."/>
            <person name="Bertin P.N."/>
            <person name="Cheung F."/>
            <person name="Cruveiller S."/>
            <person name="D'Amico S."/>
            <person name="Duilio A."/>
            <person name="Fang G."/>
            <person name="Feller G."/>
            <person name="Ho C."/>
            <person name="Mangenot S."/>
            <person name="Marino G."/>
            <person name="Nilsson J."/>
            <person name="Parrilli E."/>
            <person name="Rocha E.P.C."/>
            <person name="Rouy Z."/>
            <person name="Sekowska A."/>
            <person name="Tutino M.L."/>
            <person name="Vallenet D."/>
            <person name="von Heijne G."/>
            <person name="Danchin A."/>
        </authorList>
    </citation>
    <scope>NUCLEOTIDE SEQUENCE [LARGE SCALE GENOMIC DNA]</scope>
    <source>
        <strain>TAC 125</strain>
    </source>
</reference>
<keyword id="KW-1185">Reference proteome</keyword>
<keyword id="KW-0687">Ribonucleoprotein</keyword>
<keyword id="KW-0689">Ribosomal protein</keyword>
<sequence>MAYKLKSHRGAAKRFKKTASGGFKRKQAHLRHILTKKTSKRKLHLRPKMMVHKNDHGLVSRMLPFA</sequence>
<organism>
    <name type="scientific">Pseudoalteromonas translucida (strain TAC 125)</name>
    <dbReference type="NCBI Taxonomy" id="326442"/>
    <lineage>
        <taxon>Bacteria</taxon>
        <taxon>Pseudomonadati</taxon>
        <taxon>Pseudomonadota</taxon>
        <taxon>Gammaproteobacteria</taxon>
        <taxon>Alteromonadales</taxon>
        <taxon>Pseudoalteromonadaceae</taxon>
        <taxon>Pseudoalteromonas</taxon>
    </lineage>
</organism>
<dbReference type="EMBL" id="CR954246">
    <property type="protein sequence ID" value="CAI86473.1"/>
    <property type="molecule type" value="Genomic_DNA"/>
</dbReference>
<dbReference type="SMR" id="Q3IL79"/>
<dbReference type="STRING" id="326442.PSHAa1398"/>
<dbReference type="KEGG" id="pha:PSHAa1398"/>
<dbReference type="eggNOG" id="COG0291">
    <property type="taxonomic scope" value="Bacteria"/>
</dbReference>
<dbReference type="HOGENOM" id="CLU_169643_1_1_6"/>
<dbReference type="BioCyc" id="PHAL326442:PSHA_RS06875-MONOMER"/>
<dbReference type="Proteomes" id="UP000006843">
    <property type="component" value="Chromosome I"/>
</dbReference>
<dbReference type="GO" id="GO:0022625">
    <property type="term" value="C:cytosolic large ribosomal subunit"/>
    <property type="evidence" value="ECO:0007669"/>
    <property type="project" value="TreeGrafter"/>
</dbReference>
<dbReference type="GO" id="GO:0003735">
    <property type="term" value="F:structural constituent of ribosome"/>
    <property type="evidence" value="ECO:0007669"/>
    <property type="project" value="InterPro"/>
</dbReference>
<dbReference type="GO" id="GO:0006412">
    <property type="term" value="P:translation"/>
    <property type="evidence" value="ECO:0007669"/>
    <property type="project" value="UniProtKB-UniRule"/>
</dbReference>
<dbReference type="FunFam" id="4.10.410.60:FF:000001">
    <property type="entry name" value="50S ribosomal protein L35"/>
    <property type="match status" value="1"/>
</dbReference>
<dbReference type="Gene3D" id="4.10.410.60">
    <property type="match status" value="1"/>
</dbReference>
<dbReference type="HAMAP" id="MF_00514">
    <property type="entry name" value="Ribosomal_bL35"/>
    <property type="match status" value="1"/>
</dbReference>
<dbReference type="InterPro" id="IPR001706">
    <property type="entry name" value="Ribosomal_bL35"/>
</dbReference>
<dbReference type="InterPro" id="IPR021137">
    <property type="entry name" value="Ribosomal_bL35-like"/>
</dbReference>
<dbReference type="InterPro" id="IPR018265">
    <property type="entry name" value="Ribosomal_bL35_CS"/>
</dbReference>
<dbReference type="InterPro" id="IPR037229">
    <property type="entry name" value="Ribosomal_bL35_sf"/>
</dbReference>
<dbReference type="NCBIfam" id="TIGR00001">
    <property type="entry name" value="rpmI_bact"/>
    <property type="match status" value="1"/>
</dbReference>
<dbReference type="PANTHER" id="PTHR33343">
    <property type="entry name" value="54S RIBOSOMAL PROTEIN BL35M"/>
    <property type="match status" value="1"/>
</dbReference>
<dbReference type="PANTHER" id="PTHR33343:SF1">
    <property type="entry name" value="LARGE RIBOSOMAL SUBUNIT PROTEIN BL35M"/>
    <property type="match status" value="1"/>
</dbReference>
<dbReference type="Pfam" id="PF01632">
    <property type="entry name" value="Ribosomal_L35p"/>
    <property type="match status" value="1"/>
</dbReference>
<dbReference type="PRINTS" id="PR00064">
    <property type="entry name" value="RIBOSOMALL35"/>
</dbReference>
<dbReference type="SUPFAM" id="SSF143034">
    <property type="entry name" value="L35p-like"/>
    <property type="match status" value="1"/>
</dbReference>
<dbReference type="PROSITE" id="PS00936">
    <property type="entry name" value="RIBOSOMAL_L35"/>
    <property type="match status" value="1"/>
</dbReference>
<gene>
    <name evidence="1" type="primary">rpmI</name>
    <name type="ordered locus">PSHAa1398</name>
</gene>